<protein>
    <recommendedName>
        <fullName>Protein ERD1</fullName>
    </recommendedName>
</protein>
<gene>
    <name type="primary">ERD1</name>
    <name type="ordered locus">KLLA0A02057g</name>
</gene>
<accession>P41771</accession>
<keyword id="KW-0256">Endoplasmic reticulum</keyword>
<keyword id="KW-0472">Membrane</keyword>
<keyword id="KW-0653">Protein transport</keyword>
<keyword id="KW-1185">Reference proteome</keyword>
<keyword id="KW-0812">Transmembrane</keyword>
<keyword id="KW-1133">Transmembrane helix</keyword>
<keyword id="KW-0813">Transport</keyword>
<comment type="function">
    <text>Required for the retention of luminal endoplasmic reticulum proteins, affects glycoprotein processing in the Golgi apparatus.</text>
</comment>
<comment type="subcellular location">
    <subcellularLocation>
        <location>Endoplasmic reticulum membrane</location>
        <topology>Multi-pass membrane protein</topology>
    </subcellularLocation>
</comment>
<comment type="similarity">
    <text evidence="3">Belongs to the ERD1 family.</text>
</comment>
<evidence type="ECO:0000255" key="1"/>
<evidence type="ECO:0000255" key="2">
    <source>
        <dbReference type="PROSITE-ProRule" id="PRU00712"/>
    </source>
</evidence>
<evidence type="ECO:0000305" key="3"/>
<name>ERD1_KLULA</name>
<dbReference type="EMBL" id="U04714">
    <property type="protein sequence ID" value="AAA21530.1"/>
    <property type="molecule type" value="Genomic_DNA"/>
</dbReference>
<dbReference type="EMBL" id="CR382121">
    <property type="protein sequence ID" value="CAH02679.1"/>
    <property type="molecule type" value="Genomic_DNA"/>
</dbReference>
<dbReference type="PIR" id="S45592">
    <property type="entry name" value="S45592"/>
</dbReference>
<dbReference type="RefSeq" id="XP_451091.1">
    <property type="nucleotide sequence ID" value="XM_451091.1"/>
</dbReference>
<dbReference type="SMR" id="P41771"/>
<dbReference type="FunCoup" id="P41771">
    <property type="interactions" value="57"/>
</dbReference>
<dbReference type="STRING" id="284590.P41771"/>
<dbReference type="PaxDb" id="284590-P41771"/>
<dbReference type="KEGG" id="kla:KLLA0_A02057g"/>
<dbReference type="eggNOG" id="KOG1162">
    <property type="taxonomic scope" value="Eukaryota"/>
</dbReference>
<dbReference type="HOGENOM" id="CLU_765368_0_0_1"/>
<dbReference type="InParanoid" id="P41771"/>
<dbReference type="OMA" id="FRRWIWI"/>
<dbReference type="Proteomes" id="UP000000598">
    <property type="component" value="Chromosome A"/>
</dbReference>
<dbReference type="GO" id="GO:0005789">
    <property type="term" value="C:endoplasmic reticulum membrane"/>
    <property type="evidence" value="ECO:0007669"/>
    <property type="project" value="UniProtKB-SubCell"/>
</dbReference>
<dbReference type="GO" id="GO:0015031">
    <property type="term" value="P:protein transport"/>
    <property type="evidence" value="ECO:0007669"/>
    <property type="project" value="UniProtKB-KW"/>
</dbReference>
<dbReference type="InterPro" id="IPR004342">
    <property type="entry name" value="EXS_C"/>
</dbReference>
<dbReference type="PANTHER" id="PTHR10783:SF46">
    <property type="entry name" value="PROTEIN ERD1 HOMOLOG 2"/>
    <property type="match status" value="1"/>
</dbReference>
<dbReference type="PANTHER" id="PTHR10783">
    <property type="entry name" value="XENOTROPIC AND POLYTROPIC RETROVIRUS RECEPTOR 1-RELATED"/>
    <property type="match status" value="1"/>
</dbReference>
<dbReference type="Pfam" id="PF03124">
    <property type="entry name" value="EXS"/>
    <property type="match status" value="1"/>
</dbReference>
<dbReference type="PROSITE" id="PS51380">
    <property type="entry name" value="EXS"/>
    <property type="match status" value="1"/>
</dbReference>
<proteinExistence type="inferred from homology"/>
<sequence>MDAESVEPFLVYLPIPQRVVVLVLLGLWLWTWFLKVSVSYYDVSKVIVSNESTGLPYFNTSTKIHQSSLKLFKSISRVIIPWQLVCIILFQYSFTNNVSNKLLWFFLNVSPLLELFYIFAMILRSSAMVARCFKRILWVADIEPKPYRNNYIIISDTLTSYSKPLVDLAIYATFLFHDPTNVKCQVERYENAISLNIDVLVGVLPSLVRMIQSLREFTRGRSQKKDGSQLFNAFKYAGNIPIMLVTVYTRYYNLGPLGMMYWFMFWNSAYSFWWDVTMDWKLELFDFVNGDTSVNNNNSSNKADGLLRSILLYRKNAWYYSAMALDFILRFVWFWEYISGHSVFYGELNIFWLQILEIIRRWIWLFFKVEVEYIATTEGGKMDE</sequence>
<organism>
    <name type="scientific">Kluyveromyces lactis (strain ATCC 8585 / CBS 2359 / DSM 70799 / NBRC 1267 / NRRL Y-1140 / WM37)</name>
    <name type="common">Yeast</name>
    <name type="synonym">Candida sphaerica</name>
    <dbReference type="NCBI Taxonomy" id="284590"/>
    <lineage>
        <taxon>Eukaryota</taxon>
        <taxon>Fungi</taxon>
        <taxon>Dikarya</taxon>
        <taxon>Ascomycota</taxon>
        <taxon>Saccharomycotina</taxon>
        <taxon>Saccharomycetes</taxon>
        <taxon>Saccharomycetales</taxon>
        <taxon>Saccharomycetaceae</taxon>
        <taxon>Kluyveromyces</taxon>
    </lineage>
</organism>
<feature type="chain" id="PRO_0000087008" description="Protein ERD1">
    <location>
        <begin position="1"/>
        <end position="384"/>
    </location>
</feature>
<feature type="transmembrane region" description="Helical" evidence="1">
    <location>
        <begin position="19"/>
        <end position="36"/>
    </location>
</feature>
<feature type="transmembrane region" description="Helical" evidence="1">
    <location>
        <begin position="78"/>
        <end position="94"/>
    </location>
</feature>
<feature type="transmembrane region" description="Helical" evidence="1">
    <location>
        <begin position="102"/>
        <end position="123"/>
    </location>
</feature>
<feature type="domain" description="EXS" evidence="2">
    <location>
        <begin position="189"/>
        <end position="384"/>
    </location>
</feature>
<reference key="1">
    <citation type="journal article" date="1994" name="Yeast">
        <title>Cloning and DNA sequence of a Kluyveromyces lactis ERD1 homologue.</title>
        <authorList>
            <person name="Dean N."/>
        </authorList>
    </citation>
    <scope>NUCLEOTIDE SEQUENCE [GENOMIC DNA]</scope>
</reference>
<reference key="2">
    <citation type="journal article" date="2004" name="Nature">
        <title>Genome evolution in yeasts.</title>
        <authorList>
            <person name="Dujon B."/>
            <person name="Sherman D."/>
            <person name="Fischer G."/>
            <person name="Durrens P."/>
            <person name="Casaregola S."/>
            <person name="Lafontaine I."/>
            <person name="de Montigny J."/>
            <person name="Marck C."/>
            <person name="Neuveglise C."/>
            <person name="Talla E."/>
            <person name="Goffard N."/>
            <person name="Frangeul L."/>
            <person name="Aigle M."/>
            <person name="Anthouard V."/>
            <person name="Babour A."/>
            <person name="Barbe V."/>
            <person name="Barnay S."/>
            <person name="Blanchin S."/>
            <person name="Beckerich J.-M."/>
            <person name="Beyne E."/>
            <person name="Bleykasten C."/>
            <person name="Boisrame A."/>
            <person name="Boyer J."/>
            <person name="Cattolico L."/>
            <person name="Confanioleri F."/>
            <person name="de Daruvar A."/>
            <person name="Despons L."/>
            <person name="Fabre E."/>
            <person name="Fairhead C."/>
            <person name="Ferry-Dumazet H."/>
            <person name="Groppi A."/>
            <person name="Hantraye F."/>
            <person name="Hennequin C."/>
            <person name="Jauniaux N."/>
            <person name="Joyet P."/>
            <person name="Kachouri R."/>
            <person name="Kerrest A."/>
            <person name="Koszul R."/>
            <person name="Lemaire M."/>
            <person name="Lesur I."/>
            <person name="Ma L."/>
            <person name="Muller H."/>
            <person name="Nicaud J.-M."/>
            <person name="Nikolski M."/>
            <person name="Oztas S."/>
            <person name="Ozier-Kalogeropoulos O."/>
            <person name="Pellenz S."/>
            <person name="Potier S."/>
            <person name="Richard G.-F."/>
            <person name="Straub M.-L."/>
            <person name="Suleau A."/>
            <person name="Swennen D."/>
            <person name="Tekaia F."/>
            <person name="Wesolowski-Louvel M."/>
            <person name="Westhof E."/>
            <person name="Wirth B."/>
            <person name="Zeniou-Meyer M."/>
            <person name="Zivanovic Y."/>
            <person name="Bolotin-Fukuhara M."/>
            <person name="Thierry A."/>
            <person name="Bouchier C."/>
            <person name="Caudron B."/>
            <person name="Scarpelli C."/>
            <person name="Gaillardin C."/>
            <person name="Weissenbach J."/>
            <person name="Wincker P."/>
            <person name="Souciet J.-L."/>
        </authorList>
    </citation>
    <scope>NUCLEOTIDE SEQUENCE [LARGE SCALE GENOMIC DNA]</scope>
    <source>
        <strain>ATCC 8585 / CBS 2359 / DSM 70799 / NBRC 1267 / NRRL Y-1140 / WM37</strain>
    </source>
</reference>